<accession>B5E1V8</accession>
<name>XPT_STRP4</name>
<comment type="function">
    <text evidence="1">Converts the preformed base xanthine, a product of nucleic acid breakdown, to xanthosine 5'-monophosphate (XMP), so it can be reused for RNA or DNA synthesis.</text>
</comment>
<comment type="catalytic activity">
    <reaction evidence="1">
        <text>XMP + diphosphate = xanthine + 5-phospho-alpha-D-ribose 1-diphosphate</text>
        <dbReference type="Rhea" id="RHEA:10800"/>
        <dbReference type="ChEBI" id="CHEBI:17712"/>
        <dbReference type="ChEBI" id="CHEBI:33019"/>
        <dbReference type="ChEBI" id="CHEBI:57464"/>
        <dbReference type="ChEBI" id="CHEBI:58017"/>
        <dbReference type="EC" id="2.4.2.22"/>
    </reaction>
</comment>
<comment type="pathway">
    <text evidence="1">Purine metabolism; XMP biosynthesis via salvage pathway; XMP from xanthine: step 1/1.</text>
</comment>
<comment type="subunit">
    <text evidence="1">Homodimer.</text>
</comment>
<comment type="subcellular location">
    <subcellularLocation>
        <location evidence="1">Cytoplasm</location>
    </subcellularLocation>
</comment>
<comment type="similarity">
    <text evidence="1">Belongs to the purine/pyrimidine phosphoribosyltransferase family. Xpt subfamily.</text>
</comment>
<feature type="chain" id="PRO_1000138243" description="Xanthine phosphoribosyltransferase">
    <location>
        <begin position="1"/>
        <end position="193"/>
    </location>
</feature>
<feature type="binding site" evidence="1">
    <location>
        <position position="20"/>
    </location>
    <ligand>
        <name>xanthine</name>
        <dbReference type="ChEBI" id="CHEBI:17712"/>
    </ligand>
</feature>
<feature type="binding site" evidence="1">
    <location>
        <position position="27"/>
    </location>
    <ligand>
        <name>xanthine</name>
        <dbReference type="ChEBI" id="CHEBI:17712"/>
    </ligand>
</feature>
<feature type="binding site" evidence="1">
    <location>
        <begin position="128"/>
        <end position="132"/>
    </location>
    <ligand>
        <name>5-phospho-alpha-D-ribose 1-diphosphate</name>
        <dbReference type="ChEBI" id="CHEBI:58017"/>
    </ligand>
</feature>
<feature type="binding site" evidence="1">
    <location>
        <position position="156"/>
    </location>
    <ligand>
        <name>xanthine</name>
        <dbReference type="ChEBI" id="CHEBI:17712"/>
    </ligand>
</feature>
<evidence type="ECO:0000255" key="1">
    <source>
        <dbReference type="HAMAP-Rule" id="MF_01184"/>
    </source>
</evidence>
<proteinExistence type="inferred from homology"/>
<reference key="1">
    <citation type="journal article" date="2001" name="Microb. Drug Resist.">
        <title>Annotated draft genomic sequence from a Streptococcus pneumoniae type 19F clinical isolate.</title>
        <authorList>
            <person name="Dopazo J."/>
            <person name="Mendoza A."/>
            <person name="Herrero J."/>
            <person name="Caldara F."/>
            <person name="Humbert Y."/>
            <person name="Friedli L."/>
            <person name="Guerrier M."/>
            <person name="Grand-Schenk E."/>
            <person name="Gandin C."/>
            <person name="de Francesco M."/>
            <person name="Polissi A."/>
            <person name="Buell G."/>
            <person name="Feger G."/>
            <person name="Garcia E."/>
            <person name="Peitsch M."/>
            <person name="Garcia-Bustos J.F."/>
        </authorList>
    </citation>
    <scope>NUCLEOTIDE SEQUENCE [LARGE SCALE GENOMIC DNA]</scope>
    <source>
        <strain>G54</strain>
    </source>
</reference>
<reference key="2">
    <citation type="submission" date="2008-03" db="EMBL/GenBank/DDBJ databases">
        <title>Pneumococcal beta glucoside metabolism investigated by whole genome comparison.</title>
        <authorList>
            <person name="Mulas L."/>
            <person name="Trappetti C."/>
            <person name="Hakenbeck R."/>
            <person name="Iannelli F."/>
            <person name="Pozzi G."/>
            <person name="Davidsen T.M."/>
            <person name="Tettelin H."/>
            <person name="Oggioni M."/>
        </authorList>
    </citation>
    <scope>NUCLEOTIDE SEQUENCE [LARGE SCALE GENOMIC DNA]</scope>
    <source>
        <strain>G54</strain>
    </source>
</reference>
<organism>
    <name type="scientific">Streptococcus pneumoniae serotype 19F (strain G54)</name>
    <dbReference type="NCBI Taxonomy" id="512566"/>
    <lineage>
        <taxon>Bacteria</taxon>
        <taxon>Bacillati</taxon>
        <taxon>Bacillota</taxon>
        <taxon>Bacilli</taxon>
        <taxon>Lactobacillales</taxon>
        <taxon>Streptococcaceae</taxon>
        <taxon>Streptococcus</taxon>
    </lineage>
</organism>
<gene>
    <name evidence="1" type="primary">xpt</name>
    <name type="ordered locus">SPG_1731</name>
</gene>
<keyword id="KW-0963">Cytoplasm</keyword>
<keyword id="KW-0328">Glycosyltransferase</keyword>
<keyword id="KW-0660">Purine salvage</keyword>
<keyword id="KW-0808">Transferase</keyword>
<protein>
    <recommendedName>
        <fullName evidence="1">Xanthine phosphoribosyltransferase</fullName>
        <shortName evidence="1">XPRTase</shortName>
        <ecNumber evidence="1">2.4.2.22</ecNumber>
    </recommendedName>
</protein>
<sequence length="193" mass="20985">MKLLEERILKDGHILGDNILKVDSFLTHQVDFSLMREIGKVFAEKFAATGITKVVTIEASGIAPAVFTAEALNVPMIFAKKAKNITMNEGILTAQVYSFTKQVTSTVSIAGKFLSPEDKVLIIDDFLANGQAAKGLIQIIEQAGATVQAIGIVIEKSFQDGRDLLEKAGYPVLSLARLDRFENGQVVFKEADL</sequence>
<dbReference type="EC" id="2.4.2.22" evidence="1"/>
<dbReference type="EMBL" id="CP001015">
    <property type="protein sequence ID" value="ACF55706.1"/>
    <property type="molecule type" value="Genomic_DNA"/>
</dbReference>
<dbReference type="SMR" id="B5E1V8"/>
<dbReference type="KEGG" id="spx:SPG_1731"/>
<dbReference type="HOGENOM" id="CLU_099015_0_0_9"/>
<dbReference type="UniPathway" id="UPA00602">
    <property type="reaction ID" value="UER00658"/>
</dbReference>
<dbReference type="GO" id="GO:0005737">
    <property type="term" value="C:cytoplasm"/>
    <property type="evidence" value="ECO:0007669"/>
    <property type="project" value="UniProtKB-SubCell"/>
</dbReference>
<dbReference type="GO" id="GO:0000310">
    <property type="term" value="F:xanthine phosphoribosyltransferase activity"/>
    <property type="evidence" value="ECO:0007669"/>
    <property type="project" value="UniProtKB-UniRule"/>
</dbReference>
<dbReference type="GO" id="GO:0006166">
    <property type="term" value="P:purine ribonucleoside salvage"/>
    <property type="evidence" value="ECO:0007669"/>
    <property type="project" value="UniProtKB-KW"/>
</dbReference>
<dbReference type="GO" id="GO:0046110">
    <property type="term" value="P:xanthine metabolic process"/>
    <property type="evidence" value="ECO:0007669"/>
    <property type="project" value="InterPro"/>
</dbReference>
<dbReference type="GO" id="GO:0032265">
    <property type="term" value="P:XMP salvage"/>
    <property type="evidence" value="ECO:0007669"/>
    <property type="project" value="UniProtKB-UniRule"/>
</dbReference>
<dbReference type="CDD" id="cd06223">
    <property type="entry name" value="PRTases_typeI"/>
    <property type="match status" value="1"/>
</dbReference>
<dbReference type="Gene3D" id="3.40.50.2020">
    <property type="match status" value="1"/>
</dbReference>
<dbReference type="HAMAP" id="MF_01184">
    <property type="entry name" value="XPRTase"/>
    <property type="match status" value="1"/>
</dbReference>
<dbReference type="InterPro" id="IPR000836">
    <property type="entry name" value="PRibTrfase_dom"/>
</dbReference>
<dbReference type="InterPro" id="IPR029057">
    <property type="entry name" value="PRTase-like"/>
</dbReference>
<dbReference type="InterPro" id="IPR050118">
    <property type="entry name" value="Pur/Pyrimidine_PRTase"/>
</dbReference>
<dbReference type="InterPro" id="IPR010079">
    <property type="entry name" value="Xanthine_PRibTrfase"/>
</dbReference>
<dbReference type="NCBIfam" id="NF006671">
    <property type="entry name" value="PRK09219.1"/>
    <property type="match status" value="1"/>
</dbReference>
<dbReference type="NCBIfam" id="TIGR01744">
    <property type="entry name" value="XPRTase"/>
    <property type="match status" value="1"/>
</dbReference>
<dbReference type="PANTHER" id="PTHR43864">
    <property type="entry name" value="HYPOXANTHINE/GUANINE PHOSPHORIBOSYLTRANSFERASE"/>
    <property type="match status" value="1"/>
</dbReference>
<dbReference type="PANTHER" id="PTHR43864:SF1">
    <property type="entry name" value="XANTHINE PHOSPHORIBOSYLTRANSFERASE"/>
    <property type="match status" value="1"/>
</dbReference>
<dbReference type="Pfam" id="PF00156">
    <property type="entry name" value="Pribosyltran"/>
    <property type="match status" value="1"/>
</dbReference>
<dbReference type="SUPFAM" id="SSF53271">
    <property type="entry name" value="PRTase-like"/>
    <property type="match status" value="1"/>
</dbReference>